<protein>
    <recommendedName>
        <fullName evidence="1">UDP-N-acetylenolpyruvoylglucosamine reductase</fullName>
        <ecNumber evidence="1">1.3.1.98</ecNumber>
    </recommendedName>
    <alternativeName>
        <fullName evidence="1">UDP-N-acetylmuramate dehydrogenase</fullName>
    </alternativeName>
</protein>
<feature type="chain" id="PRO_1000117146" description="UDP-N-acetylenolpyruvoylglucosamine reductase">
    <location>
        <begin position="1"/>
        <end position="316"/>
    </location>
</feature>
<feature type="domain" description="FAD-binding PCMH-type" evidence="1">
    <location>
        <begin position="30"/>
        <end position="194"/>
    </location>
</feature>
<feature type="active site" evidence="1">
    <location>
        <position position="173"/>
    </location>
</feature>
<feature type="active site" description="Proton donor" evidence="1">
    <location>
        <position position="223"/>
    </location>
</feature>
<feature type="active site" evidence="1">
    <location>
        <position position="293"/>
    </location>
</feature>
<name>MURB_STRZT</name>
<dbReference type="EC" id="1.3.1.98" evidence="1"/>
<dbReference type="EMBL" id="CP000921">
    <property type="protein sequence ID" value="ACO23616.1"/>
    <property type="molecule type" value="Genomic_DNA"/>
</dbReference>
<dbReference type="RefSeq" id="WP_000116181.1">
    <property type="nucleotide sequence ID" value="NC_012469.1"/>
</dbReference>
<dbReference type="SMR" id="C1CQW7"/>
<dbReference type="KEGG" id="snt:SPT_0885"/>
<dbReference type="HOGENOM" id="CLU_035304_1_1_9"/>
<dbReference type="UniPathway" id="UPA00219"/>
<dbReference type="GO" id="GO:0005829">
    <property type="term" value="C:cytosol"/>
    <property type="evidence" value="ECO:0007669"/>
    <property type="project" value="TreeGrafter"/>
</dbReference>
<dbReference type="GO" id="GO:0071949">
    <property type="term" value="F:FAD binding"/>
    <property type="evidence" value="ECO:0007669"/>
    <property type="project" value="InterPro"/>
</dbReference>
<dbReference type="GO" id="GO:0008762">
    <property type="term" value="F:UDP-N-acetylmuramate dehydrogenase activity"/>
    <property type="evidence" value="ECO:0007669"/>
    <property type="project" value="UniProtKB-UniRule"/>
</dbReference>
<dbReference type="GO" id="GO:0051301">
    <property type="term" value="P:cell division"/>
    <property type="evidence" value="ECO:0007669"/>
    <property type="project" value="UniProtKB-KW"/>
</dbReference>
<dbReference type="GO" id="GO:0071555">
    <property type="term" value="P:cell wall organization"/>
    <property type="evidence" value="ECO:0007669"/>
    <property type="project" value="UniProtKB-KW"/>
</dbReference>
<dbReference type="GO" id="GO:0009252">
    <property type="term" value="P:peptidoglycan biosynthetic process"/>
    <property type="evidence" value="ECO:0007669"/>
    <property type="project" value="UniProtKB-UniRule"/>
</dbReference>
<dbReference type="GO" id="GO:0008360">
    <property type="term" value="P:regulation of cell shape"/>
    <property type="evidence" value="ECO:0007669"/>
    <property type="project" value="UniProtKB-KW"/>
</dbReference>
<dbReference type="Gene3D" id="3.30.465.10">
    <property type="match status" value="1"/>
</dbReference>
<dbReference type="Gene3D" id="3.90.78.10">
    <property type="entry name" value="UDP-N-acetylenolpyruvoylglucosamine reductase, C-terminal domain"/>
    <property type="match status" value="1"/>
</dbReference>
<dbReference type="Gene3D" id="3.30.43.10">
    <property type="entry name" value="Uridine Diphospho-n-acetylenolpyruvylglucosamine Reductase, domain 2"/>
    <property type="match status" value="1"/>
</dbReference>
<dbReference type="HAMAP" id="MF_00037">
    <property type="entry name" value="MurB"/>
    <property type="match status" value="1"/>
</dbReference>
<dbReference type="InterPro" id="IPR016166">
    <property type="entry name" value="FAD-bd_PCMH"/>
</dbReference>
<dbReference type="InterPro" id="IPR036318">
    <property type="entry name" value="FAD-bd_PCMH-like_sf"/>
</dbReference>
<dbReference type="InterPro" id="IPR016167">
    <property type="entry name" value="FAD-bd_PCMH_sub1"/>
</dbReference>
<dbReference type="InterPro" id="IPR016169">
    <property type="entry name" value="FAD-bd_PCMH_sub2"/>
</dbReference>
<dbReference type="InterPro" id="IPR003170">
    <property type="entry name" value="MurB"/>
</dbReference>
<dbReference type="InterPro" id="IPR011601">
    <property type="entry name" value="MurB_C"/>
</dbReference>
<dbReference type="InterPro" id="IPR036635">
    <property type="entry name" value="MurB_C_sf"/>
</dbReference>
<dbReference type="InterPro" id="IPR006094">
    <property type="entry name" value="Oxid_FAD_bind_N"/>
</dbReference>
<dbReference type="NCBIfam" id="TIGR00179">
    <property type="entry name" value="murB"/>
    <property type="match status" value="1"/>
</dbReference>
<dbReference type="NCBIfam" id="NF010480">
    <property type="entry name" value="PRK13905.1"/>
    <property type="match status" value="1"/>
</dbReference>
<dbReference type="PANTHER" id="PTHR21071">
    <property type="entry name" value="UDP-N-ACETYLENOLPYRUVOYLGLUCOSAMINE REDUCTASE"/>
    <property type="match status" value="1"/>
</dbReference>
<dbReference type="PANTHER" id="PTHR21071:SF4">
    <property type="entry name" value="UDP-N-ACETYLENOLPYRUVOYLGLUCOSAMINE REDUCTASE"/>
    <property type="match status" value="1"/>
</dbReference>
<dbReference type="Pfam" id="PF01565">
    <property type="entry name" value="FAD_binding_4"/>
    <property type="match status" value="1"/>
</dbReference>
<dbReference type="Pfam" id="PF02873">
    <property type="entry name" value="MurB_C"/>
    <property type="match status" value="1"/>
</dbReference>
<dbReference type="SUPFAM" id="SSF56176">
    <property type="entry name" value="FAD-binding/transporter-associated domain-like"/>
    <property type="match status" value="1"/>
</dbReference>
<dbReference type="SUPFAM" id="SSF56194">
    <property type="entry name" value="Uridine diphospho-N-Acetylenolpyruvylglucosamine reductase, MurB, C-terminal domain"/>
    <property type="match status" value="1"/>
</dbReference>
<dbReference type="PROSITE" id="PS51387">
    <property type="entry name" value="FAD_PCMH"/>
    <property type="match status" value="1"/>
</dbReference>
<comment type="function">
    <text evidence="1">Cell wall formation.</text>
</comment>
<comment type="catalytic activity">
    <reaction evidence="1">
        <text>UDP-N-acetyl-alpha-D-muramate + NADP(+) = UDP-N-acetyl-3-O-(1-carboxyvinyl)-alpha-D-glucosamine + NADPH + H(+)</text>
        <dbReference type="Rhea" id="RHEA:12248"/>
        <dbReference type="ChEBI" id="CHEBI:15378"/>
        <dbReference type="ChEBI" id="CHEBI:57783"/>
        <dbReference type="ChEBI" id="CHEBI:58349"/>
        <dbReference type="ChEBI" id="CHEBI:68483"/>
        <dbReference type="ChEBI" id="CHEBI:70757"/>
        <dbReference type="EC" id="1.3.1.98"/>
    </reaction>
</comment>
<comment type="cofactor">
    <cofactor evidence="1">
        <name>FAD</name>
        <dbReference type="ChEBI" id="CHEBI:57692"/>
    </cofactor>
</comment>
<comment type="pathway">
    <text evidence="1">Cell wall biogenesis; peptidoglycan biosynthesis.</text>
</comment>
<comment type="subcellular location">
    <subcellularLocation>
        <location evidence="1">Cytoplasm</location>
    </subcellularLocation>
</comment>
<comment type="similarity">
    <text evidence="1">Belongs to the MurB family.</text>
</comment>
<proteinExistence type="inferred from homology"/>
<sequence length="316" mass="34539">MSVREKMLEILEGIDIRFKEPLHSYSYTKVGGEADYLVFPRNRFELARVVKFANQENIPWMVLGNASNIIVRDGGIRGFVILCDKLNNVSVDGYTIEAEAGANLIETTRIALRHSLTGFEFACGIPGSVGGAVFMNAGAYGGEIAHILQSCKVLTKDGEIETLSAKDLAFGYRHSAIQESGAVVLSVKFALAPGTHQVIKQEMDRLTHLRELKQPLEYPSCGSVFKRPVGHFAGQLISEAGLKGYRIGGVEVSEKHAGFMINVADGTAKDYEDLIQSVIEKVKEHSGITLEREVRILGESLSVAKMYAGGFTPCKR</sequence>
<keyword id="KW-0131">Cell cycle</keyword>
<keyword id="KW-0132">Cell division</keyword>
<keyword id="KW-0133">Cell shape</keyword>
<keyword id="KW-0961">Cell wall biogenesis/degradation</keyword>
<keyword id="KW-0963">Cytoplasm</keyword>
<keyword id="KW-0274">FAD</keyword>
<keyword id="KW-0285">Flavoprotein</keyword>
<keyword id="KW-0521">NADP</keyword>
<keyword id="KW-0560">Oxidoreductase</keyword>
<keyword id="KW-0573">Peptidoglycan synthesis</keyword>
<reference key="1">
    <citation type="journal article" date="2010" name="Genome Biol.">
        <title>Structure and dynamics of the pan-genome of Streptococcus pneumoniae and closely related species.</title>
        <authorList>
            <person name="Donati C."/>
            <person name="Hiller N.L."/>
            <person name="Tettelin H."/>
            <person name="Muzzi A."/>
            <person name="Croucher N.J."/>
            <person name="Angiuoli S.V."/>
            <person name="Oggioni M."/>
            <person name="Dunning Hotopp J.C."/>
            <person name="Hu F.Z."/>
            <person name="Riley D.R."/>
            <person name="Covacci A."/>
            <person name="Mitchell T.J."/>
            <person name="Bentley S.D."/>
            <person name="Kilian M."/>
            <person name="Ehrlich G.D."/>
            <person name="Rappuoli R."/>
            <person name="Moxon E.R."/>
            <person name="Masignani V."/>
        </authorList>
    </citation>
    <scope>NUCLEOTIDE SEQUENCE [LARGE SCALE GENOMIC DNA]</scope>
    <source>
        <strain>Taiwan19F-14</strain>
    </source>
</reference>
<organism>
    <name type="scientific">Streptococcus pneumoniae (strain Taiwan19F-14)</name>
    <dbReference type="NCBI Taxonomy" id="487213"/>
    <lineage>
        <taxon>Bacteria</taxon>
        <taxon>Bacillati</taxon>
        <taxon>Bacillota</taxon>
        <taxon>Bacilli</taxon>
        <taxon>Lactobacillales</taxon>
        <taxon>Streptococcaceae</taxon>
        <taxon>Streptococcus</taxon>
    </lineage>
</organism>
<evidence type="ECO:0000255" key="1">
    <source>
        <dbReference type="HAMAP-Rule" id="MF_00037"/>
    </source>
</evidence>
<accession>C1CQW7</accession>
<gene>
    <name evidence="1" type="primary">murB</name>
    <name type="ordered locus">SPT_0885</name>
</gene>